<keyword id="KW-0046">Antibiotic resistance</keyword>
<keyword id="KW-0997">Cell inner membrane</keyword>
<keyword id="KW-1003">Cell membrane</keyword>
<keyword id="KW-0133">Cell shape</keyword>
<keyword id="KW-0961">Cell wall biogenesis/degradation</keyword>
<keyword id="KW-0378">Hydrolase</keyword>
<keyword id="KW-0472">Membrane</keyword>
<keyword id="KW-0573">Peptidoglycan synthesis</keyword>
<keyword id="KW-1185">Reference proteome</keyword>
<keyword id="KW-0812">Transmembrane</keyword>
<keyword id="KW-1133">Transmembrane helix</keyword>
<feature type="chain" id="PRO_0000151114" description="Undecaprenyl-diphosphatase">
    <location>
        <begin position="1"/>
        <end position="266"/>
    </location>
</feature>
<feature type="transmembrane region" description="Helical" evidence="1">
    <location>
        <begin position="4"/>
        <end position="24"/>
    </location>
</feature>
<feature type="transmembrane region" description="Helical" evidence="1">
    <location>
        <begin position="39"/>
        <end position="59"/>
    </location>
</feature>
<feature type="transmembrane region" description="Helical" evidence="1">
    <location>
        <begin position="86"/>
        <end position="106"/>
    </location>
</feature>
<feature type="transmembrane region" description="Helical" evidence="1">
    <location>
        <begin position="112"/>
        <end position="132"/>
    </location>
</feature>
<feature type="transmembrane region" description="Helical" evidence="1">
    <location>
        <begin position="145"/>
        <end position="165"/>
    </location>
</feature>
<feature type="transmembrane region" description="Helical" evidence="1">
    <location>
        <begin position="182"/>
        <end position="202"/>
    </location>
</feature>
<feature type="transmembrane region" description="Helical" evidence="1">
    <location>
        <begin position="210"/>
        <end position="230"/>
    </location>
</feature>
<feature type="transmembrane region" description="Helical" evidence="1">
    <location>
        <begin position="246"/>
        <end position="266"/>
    </location>
</feature>
<reference key="1">
    <citation type="journal article" date="1997" name="Nature">
        <title>Genomic sequence of a Lyme disease spirochaete, Borrelia burgdorferi.</title>
        <authorList>
            <person name="Fraser C.M."/>
            <person name="Casjens S."/>
            <person name="Huang W.M."/>
            <person name="Sutton G.G."/>
            <person name="Clayton R.A."/>
            <person name="Lathigra R."/>
            <person name="White O."/>
            <person name="Ketchum K.A."/>
            <person name="Dodson R.J."/>
            <person name="Hickey E.K."/>
            <person name="Gwinn M.L."/>
            <person name="Dougherty B.A."/>
            <person name="Tomb J.-F."/>
            <person name="Fleischmann R.D."/>
            <person name="Richardson D.L."/>
            <person name="Peterson J.D."/>
            <person name="Kerlavage A.R."/>
            <person name="Quackenbush J."/>
            <person name="Salzberg S.L."/>
            <person name="Hanson M."/>
            <person name="van Vugt R."/>
            <person name="Palmer N."/>
            <person name="Adams M.D."/>
            <person name="Gocayne J.D."/>
            <person name="Weidman J.F."/>
            <person name="Utterback T.R."/>
            <person name="Watthey L."/>
            <person name="McDonald L.A."/>
            <person name="Artiach P."/>
            <person name="Bowman C."/>
            <person name="Garland S.A."/>
            <person name="Fujii C."/>
            <person name="Cotton M.D."/>
            <person name="Horst K."/>
            <person name="Roberts K.M."/>
            <person name="Hatch B."/>
            <person name="Smith H.O."/>
            <person name="Venter J.C."/>
        </authorList>
    </citation>
    <scope>NUCLEOTIDE SEQUENCE [LARGE SCALE GENOMIC DNA]</scope>
    <source>
        <strain>ATCC 35210 / DSM 4680 / CIP 102532 / B31</strain>
    </source>
</reference>
<dbReference type="EC" id="3.6.1.27" evidence="1"/>
<dbReference type="EMBL" id="AE000783">
    <property type="protein sequence ID" value="AAC66636.1"/>
    <property type="molecule type" value="Genomic_DNA"/>
</dbReference>
<dbReference type="PIR" id="B70132">
    <property type="entry name" value="B70132"/>
</dbReference>
<dbReference type="RefSeq" id="NP_212392.1">
    <property type="nucleotide sequence ID" value="NC_001318.1"/>
</dbReference>
<dbReference type="RefSeq" id="WP_002657697.1">
    <property type="nucleotide sequence ID" value="NC_001318.1"/>
</dbReference>
<dbReference type="SMR" id="O51273"/>
<dbReference type="STRING" id="224326.BB_0258"/>
<dbReference type="PaxDb" id="224326-BB_0258"/>
<dbReference type="EnsemblBacteria" id="AAC66636">
    <property type="protein sequence ID" value="AAC66636"/>
    <property type="gene ID" value="BB_0258"/>
</dbReference>
<dbReference type="KEGG" id="bbu:BB_0258"/>
<dbReference type="PATRIC" id="fig|224326.49.peg.657"/>
<dbReference type="HOGENOM" id="CLU_060296_1_2_12"/>
<dbReference type="OrthoDB" id="9808289at2"/>
<dbReference type="Proteomes" id="UP000001807">
    <property type="component" value="Chromosome"/>
</dbReference>
<dbReference type="GO" id="GO:0005886">
    <property type="term" value="C:plasma membrane"/>
    <property type="evidence" value="ECO:0007669"/>
    <property type="project" value="UniProtKB-SubCell"/>
</dbReference>
<dbReference type="GO" id="GO:0050380">
    <property type="term" value="F:undecaprenyl-diphosphatase activity"/>
    <property type="evidence" value="ECO:0007669"/>
    <property type="project" value="UniProtKB-UniRule"/>
</dbReference>
<dbReference type="GO" id="GO:0071555">
    <property type="term" value="P:cell wall organization"/>
    <property type="evidence" value="ECO:0007669"/>
    <property type="project" value="UniProtKB-KW"/>
</dbReference>
<dbReference type="GO" id="GO:0009252">
    <property type="term" value="P:peptidoglycan biosynthetic process"/>
    <property type="evidence" value="ECO:0007669"/>
    <property type="project" value="UniProtKB-KW"/>
</dbReference>
<dbReference type="GO" id="GO:0008360">
    <property type="term" value="P:regulation of cell shape"/>
    <property type="evidence" value="ECO:0007669"/>
    <property type="project" value="UniProtKB-KW"/>
</dbReference>
<dbReference type="GO" id="GO:0046677">
    <property type="term" value="P:response to antibiotic"/>
    <property type="evidence" value="ECO:0007669"/>
    <property type="project" value="UniProtKB-UniRule"/>
</dbReference>
<dbReference type="HAMAP" id="MF_01006">
    <property type="entry name" value="Undec_diphosphatase"/>
    <property type="match status" value="1"/>
</dbReference>
<dbReference type="InterPro" id="IPR003824">
    <property type="entry name" value="UppP"/>
</dbReference>
<dbReference type="NCBIfam" id="NF001396">
    <property type="entry name" value="PRK00281.3-3"/>
    <property type="match status" value="1"/>
</dbReference>
<dbReference type="NCBIfam" id="TIGR00753">
    <property type="entry name" value="undec_PP_bacA"/>
    <property type="match status" value="1"/>
</dbReference>
<dbReference type="PANTHER" id="PTHR30622">
    <property type="entry name" value="UNDECAPRENYL-DIPHOSPHATASE"/>
    <property type="match status" value="1"/>
</dbReference>
<dbReference type="PANTHER" id="PTHR30622:SF2">
    <property type="entry name" value="UNDECAPRENYL-DIPHOSPHATASE"/>
    <property type="match status" value="1"/>
</dbReference>
<dbReference type="Pfam" id="PF02673">
    <property type="entry name" value="BacA"/>
    <property type="match status" value="1"/>
</dbReference>
<evidence type="ECO:0000255" key="1">
    <source>
        <dbReference type="HAMAP-Rule" id="MF_01006"/>
    </source>
</evidence>
<comment type="function">
    <text evidence="1">Catalyzes the dephosphorylation of undecaprenyl diphosphate (UPP). Confers resistance to bacitracin.</text>
</comment>
<comment type="catalytic activity">
    <reaction evidence="1">
        <text>di-trans,octa-cis-undecaprenyl diphosphate + H2O = di-trans,octa-cis-undecaprenyl phosphate + phosphate + H(+)</text>
        <dbReference type="Rhea" id="RHEA:28094"/>
        <dbReference type="ChEBI" id="CHEBI:15377"/>
        <dbReference type="ChEBI" id="CHEBI:15378"/>
        <dbReference type="ChEBI" id="CHEBI:43474"/>
        <dbReference type="ChEBI" id="CHEBI:58405"/>
        <dbReference type="ChEBI" id="CHEBI:60392"/>
        <dbReference type="EC" id="3.6.1.27"/>
    </reaction>
</comment>
<comment type="subcellular location">
    <subcellularLocation>
        <location evidence="1">Cell inner membrane</location>
        <topology evidence="1">Multi-pass membrane protein</topology>
    </subcellularLocation>
</comment>
<comment type="miscellaneous">
    <text>Bacitracin is thought to be involved in the inhibition of peptidoglycan synthesis by sequestering undecaprenyl diphosphate, thereby reducing the pool of lipid carrier available.</text>
</comment>
<comment type="similarity">
    <text evidence="1">Belongs to the UppP family.</text>
</comment>
<sequence length="266" mass="30271">MTNILSAIILGIIQGITEFLPISSSGHLLLFRHFINLKLSIIFDIYLHLATVLVIIIYYRKRILELFLTFIRFSLRKTVKSDLTNLKLILLILIITIVTGVVGTFISKYESMFTLSFVLINFIITGILILMLEFNFLKVDFKGNILLAGIFMGLMQGLGALPGISRSGITIFSASVIGFNRKSAFEISFLSLIPIVFGAILLKHKEFYDIFMVLNFFEINLGALVAFVVGIFSINFFFKMLNNKKLYYFSIYLFALSIIVCYFVRI</sequence>
<accession>O51273</accession>
<organism>
    <name type="scientific">Borreliella burgdorferi (strain ATCC 35210 / DSM 4680 / CIP 102532 / B31)</name>
    <name type="common">Borrelia burgdorferi</name>
    <dbReference type="NCBI Taxonomy" id="224326"/>
    <lineage>
        <taxon>Bacteria</taxon>
        <taxon>Pseudomonadati</taxon>
        <taxon>Spirochaetota</taxon>
        <taxon>Spirochaetia</taxon>
        <taxon>Spirochaetales</taxon>
        <taxon>Borreliaceae</taxon>
        <taxon>Borreliella</taxon>
    </lineage>
</organism>
<gene>
    <name evidence="1" type="primary">uppP</name>
    <name type="synonym">bacA</name>
    <name type="synonym">upk</name>
    <name type="ordered locus">BB_0258</name>
</gene>
<protein>
    <recommendedName>
        <fullName evidence="1">Undecaprenyl-diphosphatase</fullName>
        <ecNumber evidence="1">3.6.1.27</ecNumber>
    </recommendedName>
    <alternativeName>
        <fullName evidence="1">Bacitracin resistance protein</fullName>
    </alternativeName>
    <alternativeName>
        <fullName evidence="1">Undecaprenyl pyrophosphate phosphatase</fullName>
    </alternativeName>
</protein>
<proteinExistence type="inferred from homology"/>
<name>UPPP_BORBU</name>